<organism>
    <name type="scientific">Arabidopsis thaliana</name>
    <name type="common">Mouse-ear cress</name>
    <dbReference type="NCBI Taxonomy" id="3702"/>
    <lineage>
        <taxon>Eukaryota</taxon>
        <taxon>Viridiplantae</taxon>
        <taxon>Streptophyta</taxon>
        <taxon>Embryophyta</taxon>
        <taxon>Tracheophyta</taxon>
        <taxon>Spermatophyta</taxon>
        <taxon>Magnoliopsida</taxon>
        <taxon>eudicotyledons</taxon>
        <taxon>Gunneridae</taxon>
        <taxon>Pentapetalae</taxon>
        <taxon>rosids</taxon>
        <taxon>malvids</taxon>
        <taxon>Brassicales</taxon>
        <taxon>Brassicaceae</taxon>
        <taxon>Camelineae</taxon>
        <taxon>Arabidopsis</taxon>
    </lineage>
</organism>
<accession>Q9FY71</accession>
<protein>
    <recommendedName>
        <fullName>Protein EXORDIUM-like 4</fullName>
    </recommendedName>
</protein>
<gene>
    <name type="primary">EXL4</name>
    <name type="ordered locus">At5g09440</name>
    <name type="ORF">T5E8.240</name>
</gene>
<reference key="1">
    <citation type="journal article" date="2000" name="Nature">
        <title>Sequence and analysis of chromosome 5 of the plant Arabidopsis thaliana.</title>
        <authorList>
            <person name="Tabata S."/>
            <person name="Kaneko T."/>
            <person name="Nakamura Y."/>
            <person name="Kotani H."/>
            <person name="Kato T."/>
            <person name="Asamizu E."/>
            <person name="Miyajima N."/>
            <person name="Sasamoto S."/>
            <person name="Kimura T."/>
            <person name="Hosouchi T."/>
            <person name="Kawashima K."/>
            <person name="Kohara M."/>
            <person name="Matsumoto M."/>
            <person name="Matsuno A."/>
            <person name="Muraki A."/>
            <person name="Nakayama S."/>
            <person name="Nakazaki N."/>
            <person name="Naruo K."/>
            <person name="Okumura S."/>
            <person name="Shinpo S."/>
            <person name="Takeuchi C."/>
            <person name="Wada T."/>
            <person name="Watanabe A."/>
            <person name="Yamada M."/>
            <person name="Yasuda M."/>
            <person name="Sato S."/>
            <person name="de la Bastide M."/>
            <person name="Huang E."/>
            <person name="Spiegel L."/>
            <person name="Gnoj L."/>
            <person name="O'Shaughnessy A."/>
            <person name="Preston R."/>
            <person name="Habermann K."/>
            <person name="Murray J."/>
            <person name="Johnson D."/>
            <person name="Rohlfing T."/>
            <person name="Nelson J."/>
            <person name="Stoneking T."/>
            <person name="Pepin K."/>
            <person name="Spieth J."/>
            <person name="Sekhon M."/>
            <person name="Armstrong J."/>
            <person name="Becker M."/>
            <person name="Belter E."/>
            <person name="Cordum H."/>
            <person name="Cordes M."/>
            <person name="Courtney L."/>
            <person name="Courtney W."/>
            <person name="Dante M."/>
            <person name="Du H."/>
            <person name="Edwards J."/>
            <person name="Fryman J."/>
            <person name="Haakensen B."/>
            <person name="Lamar E."/>
            <person name="Latreille P."/>
            <person name="Leonard S."/>
            <person name="Meyer R."/>
            <person name="Mulvaney E."/>
            <person name="Ozersky P."/>
            <person name="Riley A."/>
            <person name="Strowmatt C."/>
            <person name="Wagner-McPherson C."/>
            <person name="Wollam A."/>
            <person name="Yoakum M."/>
            <person name="Bell M."/>
            <person name="Dedhia N."/>
            <person name="Parnell L."/>
            <person name="Shah R."/>
            <person name="Rodriguez M."/>
            <person name="Hoon See L."/>
            <person name="Vil D."/>
            <person name="Baker J."/>
            <person name="Kirchoff K."/>
            <person name="Toth K."/>
            <person name="King L."/>
            <person name="Bahret A."/>
            <person name="Miller B."/>
            <person name="Marra M.A."/>
            <person name="Martienssen R."/>
            <person name="McCombie W.R."/>
            <person name="Wilson R.K."/>
            <person name="Murphy G."/>
            <person name="Bancroft I."/>
            <person name="Volckaert G."/>
            <person name="Wambutt R."/>
            <person name="Duesterhoeft A."/>
            <person name="Stiekema W."/>
            <person name="Pohl T."/>
            <person name="Entian K.-D."/>
            <person name="Terryn N."/>
            <person name="Hartley N."/>
            <person name="Bent E."/>
            <person name="Johnson S."/>
            <person name="Langham S.-A."/>
            <person name="McCullagh B."/>
            <person name="Robben J."/>
            <person name="Grymonprez B."/>
            <person name="Zimmermann W."/>
            <person name="Ramsperger U."/>
            <person name="Wedler H."/>
            <person name="Balke K."/>
            <person name="Wedler E."/>
            <person name="Peters S."/>
            <person name="van Staveren M."/>
            <person name="Dirkse W."/>
            <person name="Mooijman P."/>
            <person name="Klein Lankhorst R."/>
            <person name="Weitzenegger T."/>
            <person name="Bothe G."/>
            <person name="Rose M."/>
            <person name="Hauf J."/>
            <person name="Berneiser S."/>
            <person name="Hempel S."/>
            <person name="Feldpausch M."/>
            <person name="Lamberth S."/>
            <person name="Villarroel R."/>
            <person name="Gielen J."/>
            <person name="Ardiles W."/>
            <person name="Bents O."/>
            <person name="Lemcke K."/>
            <person name="Kolesov G."/>
            <person name="Mayer K.F.X."/>
            <person name="Rudd S."/>
            <person name="Schoof H."/>
            <person name="Schueller C."/>
            <person name="Zaccaria P."/>
            <person name="Mewes H.-W."/>
            <person name="Bevan M."/>
            <person name="Fransz P.F."/>
        </authorList>
    </citation>
    <scope>NUCLEOTIDE SEQUENCE [LARGE SCALE GENOMIC DNA]</scope>
    <scope>G</scope>
    <source>
        <strain>cv. Columbia</strain>
    </source>
</reference>
<reference key="2">
    <citation type="journal article" date="2017" name="Plant J.">
        <title>Araport11: a complete reannotation of the Arabidopsis thaliana reference genome.</title>
        <authorList>
            <person name="Cheng C.Y."/>
            <person name="Krishnakumar V."/>
            <person name="Chan A.P."/>
            <person name="Thibaud-Nissen F."/>
            <person name="Schobel S."/>
            <person name="Town C.D."/>
        </authorList>
    </citation>
    <scope>GENOME REANNOTATION</scope>
    <source>
        <strain>cv. Columbia</strain>
    </source>
</reference>
<reference key="3">
    <citation type="journal article" date="2003" name="Science">
        <title>Empirical analysis of transcriptional activity in the Arabidopsis genome.</title>
        <authorList>
            <person name="Yamada K."/>
            <person name="Lim J."/>
            <person name="Dale J.M."/>
            <person name="Chen H."/>
            <person name="Shinn P."/>
            <person name="Palm C.J."/>
            <person name="Southwick A.M."/>
            <person name="Wu H.C."/>
            <person name="Kim C.J."/>
            <person name="Nguyen M."/>
            <person name="Pham P.K."/>
            <person name="Cheuk R.F."/>
            <person name="Karlin-Newmann G."/>
            <person name="Liu S.X."/>
            <person name="Lam B."/>
            <person name="Sakano H."/>
            <person name="Wu T."/>
            <person name="Yu G."/>
            <person name="Miranda M."/>
            <person name="Quach H.L."/>
            <person name="Tripp M."/>
            <person name="Chang C.H."/>
            <person name="Lee J.M."/>
            <person name="Toriumi M.J."/>
            <person name="Chan M.M."/>
            <person name="Tang C.C."/>
            <person name="Onodera C.S."/>
            <person name="Deng J.M."/>
            <person name="Akiyama K."/>
            <person name="Ansari Y."/>
            <person name="Arakawa T."/>
            <person name="Banh J."/>
            <person name="Banno F."/>
            <person name="Bowser L."/>
            <person name="Brooks S.Y."/>
            <person name="Carninci P."/>
            <person name="Chao Q."/>
            <person name="Choy N."/>
            <person name="Enju A."/>
            <person name="Goldsmith A.D."/>
            <person name="Gurjal M."/>
            <person name="Hansen N.F."/>
            <person name="Hayashizaki Y."/>
            <person name="Johnson-Hopson C."/>
            <person name="Hsuan V.W."/>
            <person name="Iida K."/>
            <person name="Karnes M."/>
            <person name="Khan S."/>
            <person name="Koesema E."/>
            <person name="Ishida J."/>
            <person name="Jiang P.X."/>
            <person name="Jones T."/>
            <person name="Kawai J."/>
            <person name="Kamiya A."/>
            <person name="Meyers C."/>
            <person name="Nakajima M."/>
            <person name="Narusaka M."/>
            <person name="Seki M."/>
            <person name="Sakurai T."/>
            <person name="Satou M."/>
            <person name="Tamse R."/>
            <person name="Vaysberg M."/>
            <person name="Wallender E.K."/>
            <person name="Wong C."/>
            <person name="Yamamura Y."/>
            <person name="Yuan S."/>
            <person name="Shinozaki K."/>
            <person name="Davis R.W."/>
            <person name="Theologis A."/>
            <person name="Ecker J.R."/>
        </authorList>
    </citation>
    <scope>NUCLEOTIDE SEQUENCE [LARGE SCALE MRNA]</scope>
    <source>
        <strain>cv. Columbia</strain>
    </source>
</reference>
<reference key="4">
    <citation type="submission" date="2002-03" db="EMBL/GenBank/DDBJ databases">
        <title>Full-length cDNA from Arabidopsis thaliana.</title>
        <authorList>
            <person name="Brover V.V."/>
            <person name="Troukhan M.E."/>
            <person name="Alexandrov N.A."/>
            <person name="Lu Y.-P."/>
            <person name="Flavell R.B."/>
            <person name="Feldmann K.A."/>
        </authorList>
    </citation>
    <scope>NUCLEOTIDE SEQUENCE [LARGE SCALE MRNA]</scope>
</reference>
<reference key="5">
    <citation type="journal article" date="2009" name="BMC Plant Biol.">
        <title>The extracellular EXO protein mediates cell expansion in Arabidopsis leaves.</title>
        <authorList>
            <person name="Schroder F."/>
            <person name="Lisso J."/>
            <person name="Lange P."/>
            <person name="Mussig C."/>
        </authorList>
    </citation>
    <scope>GENE FAMILY</scope>
    <scope>NOMENCLATURE</scope>
</reference>
<name>EXOL4_ARATH</name>
<comment type="function">
    <text evidence="1">May play a role in a brassinosteroid-dependent regulation of growth and development.</text>
</comment>
<comment type="subcellular location">
    <subcellularLocation>
        <location>Secreted</location>
    </subcellularLocation>
    <subcellularLocation>
        <location>Secreted</location>
        <location>Extracellular space</location>
    </subcellularLocation>
    <subcellularLocation>
        <location evidence="3">Secreted</location>
        <location evidence="3">Extracellular space</location>
        <location evidence="3">Apoplast</location>
    </subcellularLocation>
</comment>
<comment type="similarity">
    <text evidence="3">Belongs to the EXORDIUM family.</text>
</comment>
<proteinExistence type="evidence at transcript level"/>
<feature type="signal peptide" evidence="2">
    <location>
        <begin position="1"/>
        <end position="23"/>
    </location>
</feature>
<feature type="chain" id="PRO_0000430284" description="Protein EXORDIUM-like 4">
    <location>
        <begin position="24"/>
        <end position="278"/>
    </location>
</feature>
<feature type="glycosylation site" description="N-linked (GlcNAc...) asparagine" evidence="2">
    <location>
        <position position="35"/>
    </location>
</feature>
<evidence type="ECO:0000250" key="1"/>
<evidence type="ECO:0000255" key="2"/>
<evidence type="ECO:0000305" key="3"/>
<keyword id="KW-0052">Apoplast</keyword>
<keyword id="KW-0325">Glycoprotein</keyword>
<keyword id="KW-1185">Reference proteome</keyword>
<keyword id="KW-0964">Secreted</keyword>
<keyword id="KW-0732">Signal</keyword>
<sequence>MAYNYRFAILLVLLSATVGFTAAALKPPVRTLNGNITLNLIWYGKFTPIQRSIIVDFIRSISSVTAAKGPSVASWWKTTEKYKTGVSTLVVGKQLLLENYPLGKSLKSPYLRALSSKLNAGGARSITVVLTAKDVTVEGLCMNRCGTHGSKSSSVNSGAYVWVGNSETQCPGYCAWPFHQPIYGPQSPPLVAPNGDVGVDGMIINIATLLVNTVTNPSPEAVSACTGIFGSGAYPGYAGRVLVDKTSGASYNALGLAGRKYLLPALWDPQTSTCKTMV</sequence>
<dbReference type="EMBL" id="AL391712">
    <property type="protein sequence ID" value="CAC05470.1"/>
    <property type="molecule type" value="Genomic_DNA"/>
</dbReference>
<dbReference type="EMBL" id="CP002688">
    <property type="protein sequence ID" value="AED91393.1"/>
    <property type="molecule type" value="Genomic_DNA"/>
</dbReference>
<dbReference type="EMBL" id="AY065126">
    <property type="protein sequence ID" value="AAL38302.1"/>
    <property type="molecule type" value="mRNA"/>
</dbReference>
<dbReference type="EMBL" id="AY081560">
    <property type="protein sequence ID" value="AAM10122.1"/>
    <property type="molecule type" value="mRNA"/>
</dbReference>
<dbReference type="EMBL" id="AY087813">
    <property type="protein sequence ID" value="AAM65367.1"/>
    <property type="molecule type" value="mRNA"/>
</dbReference>
<dbReference type="RefSeq" id="NP_196506.1">
    <property type="nucleotide sequence ID" value="NM_120981.3"/>
</dbReference>
<dbReference type="BioGRID" id="16081">
    <property type="interactions" value="2"/>
</dbReference>
<dbReference type="FunCoup" id="Q9FY71">
    <property type="interactions" value="11"/>
</dbReference>
<dbReference type="STRING" id="3702.Q9FY71"/>
<dbReference type="GlyCosmos" id="Q9FY71">
    <property type="glycosylation" value="1 site, No reported glycans"/>
</dbReference>
<dbReference type="GlyGen" id="Q9FY71">
    <property type="glycosylation" value="1 site"/>
</dbReference>
<dbReference type="PaxDb" id="3702-AT5G09440.1"/>
<dbReference type="ProteomicsDB" id="222302"/>
<dbReference type="EnsemblPlants" id="AT5G09440.1">
    <property type="protein sequence ID" value="AT5G09440.1"/>
    <property type="gene ID" value="AT5G09440"/>
</dbReference>
<dbReference type="GeneID" id="830803"/>
<dbReference type="Gramene" id="AT5G09440.1">
    <property type="protein sequence ID" value="AT5G09440.1"/>
    <property type="gene ID" value="AT5G09440"/>
</dbReference>
<dbReference type="KEGG" id="ath:AT5G09440"/>
<dbReference type="Araport" id="AT5G09440"/>
<dbReference type="TAIR" id="AT5G09440">
    <property type="gene designation" value="EXL4"/>
</dbReference>
<dbReference type="eggNOG" id="KOG0017">
    <property type="taxonomic scope" value="Eukaryota"/>
</dbReference>
<dbReference type="HOGENOM" id="CLU_053777_1_0_1"/>
<dbReference type="InParanoid" id="Q9FY71"/>
<dbReference type="OMA" id="HWYGNFT"/>
<dbReference type="OrthoDB" id="2017091at2759"/>
<dbReference type="PhylomeDB" id="Q9FY71"/>
<dbReference type="PRO" id="PR:Q9FY71"/>
<dbReference type="Proteomes" id="UP000006548">
    <property type="component" value="Chromosome 5"/>
</dbReference>
<dbReference type="ExpressionAtlas" id="Q9FY71">
    <property type="expression patterns" value="baseline and differential"/>
</dbReference>
<dbReference type="GO" id="GO:0048046">
    <property type="term" value="C:apoplast"/>
    <property type="evidence" value="ECO:0007669"/>
    <property type="project" value="UniProtKB-SubCell"/>
</dbReference>
<dbReference type="GO" id="GO:0009506">
    <property type="term" value="C:plasmodesma"/>
    <property type="evidence" value="ECO:0007005"/>
    <property type="project" value="TAIR"/>
</dbReference>
<dbReference type="GO" id="GO:0002239">
    <property type="term" value="P:response to oomycetes"/>
    <property type="evidence" value="ECO:0000270"/>
    <property type="project" value="TAIR"/>
</dbReference>
<dbReference type="InterPro" id="IPR006766">
    <property type="entry name" value="EXORDIUM-like"/>
</dbReference>
<dbReference type="PANTHER" id="PTHR31279:SF43">
    <property type="entry name" value="PROTEIN EXORDIUM-LIKE 4"/>
    <property type="match status" value="1"/>
</dbReference>
<dbReference type="PANTHER" id="PTHR31279">
    <property type="entry name" value="PROTEIN EXORDIUM-LIKE 5"/>
    <property type="match status" value="1"/>
</dbReference>
<dbReference type="Pfam" id="PF04674">
    <property type="entry name" value="Phi_1"/>
    <property type="match status" value="1"/>
</dbReference>